<organism>
    <name type="scientific">Xenopus laevis</name>
    <name type="common">African clawed frog</name>
    <dbReference type="NCBI Taxonomy" id="8355"/>
    <lineage>
        <taxon>Eukaryota</taxon>
        <taxon>Metazoa</taxon>
        <taxon>Chordata</taxon>
        <taxon>Craniata</taxon>
        <taxon>Vertebrata</taxon>
        <taxon>Euteleostomi</taxon>
        <taxon>Amphibia</taxon>
        <taxon>Batrachia</taxon>
        <taxon>Anura</taxon>
        <taxon>Pipoidea</taxon>
        <taxon>Pipidae</taxon>
        <taxon>Xenopodinae</taxon>
        <taxon>Xenopus</taxon>
        <taxon>Xenopus</taxon>
    </lineage>
</organism>
<evidence type="ECO:0000255" key="1">
    <source>
        <dbReference type="HAMAP-Rule" id="MF_03067"/>
    </source>
</evidence>
<evidence type="ECO:0000256" key="2">
    <source>
        <dbReference type="SAM" id="MobiDB-lite"/>
    </source>
</evidence>
<feature type="chain" id="PRO_0000367280" description="E3 ubiquitin-protein ligase rnf8-B">
    <location>
        <begin position="1"/>
        <end position="532"/>
    </location>
</feature>
<feature type="domain" description="FHA" evidence="1">
    <location>
        <begin position="30"/>
        <end position="84"/>
    </location>
</feature>
<feature type="zinc finger region" description="RING-type" evidence="1">
    <location>
        <begin position="377"/>
        <end position="415"/>
    </location>
</feature>
<feature type="region of interest" description="Disordered" evidence="2">
    <location>
        <begin position="127"/>
        <end position="209"/>
    </location>
</feature>
<feature type="compositionally biased region" description="Basic and acidic residues" evidence="2">
    <location>
        <begin position="169"/>
        <end position="178"/>
    </location>
</feature>
<proteinExistence type="evidence at transcript level"/>
<sequence>MADGGSGMCWCLRRCGKNQEVLLLPDGEEVTMGRGLGVTYQLKPTLCPLMISRTHCLFKQNARDEWTVTDNKSLNGVWRNKERLEPHKAYTLSEGTLIQLGVPPPNMESAEFEYILVREHLDKVSGSLIRPLPGKTKATRTKRKFPSEDADASGNEGPSNFSIPKFCRVSRDGEDSAKSLRTSHKQPKASGVEPELNDSVETDTVSPTQQQCCRSTLQLSRVRETMEEIRRLNVQIQEKQIKMQEKLNHPQESQLGSNSYLVVQKELQALRNQLSNEQEQHLQSVKELKEIFQEEQQSMGSQKQAEEEHLKEQLAQALQEHTQLMQELNRNKNDFEQIIQAKNKELQETKEEKEKVCAQKEEVLNHMNDVLDNELQCIICSEHFIEAVTLNCAHSFCSYCIKSWRKRKEECPICRQEILSETRSLVLDNCIDSMVDKLSPEMKNRRAALILERKEMVQAEESNPVLVVSDSSSFLSDTFYISSSSSDSDELGSDFWMVNEEEEYEESLFGCGTDELDSSDFESDDDDSFLIV</sequence>
<name>RNF8B_XENLA</name>
<dbReference type="EC" id="2.3.2.27" evidence="1"/>
<dbReference type="EMBL" id="BC070792">
    <property type="protein sequence ID" value="AAH70792.1"/>
    <property type="molecule type" value="mRNA"/>
</dbReference>
<dbReference type="RefSeq" id="NP_001084862.1">
    <property type="nucleotide sequence ID" value="NM_001091393.1"/>
</dbReference>
<dbReference type="SMR" id="Q6NRG0"/>
<dbReference type="DNASU" id="431911"/>
<dbReference type="GeneID" id="431911"/>
<dbReference type="KEGG" id="xla:431911"/>
<dbReference type="AGR" id="Xenbase:XB-GENE-5914276"/>
<dbReference type="CTD" id="431911"/>
<dbReference type="Xenbase" id="XB-GENE-5914276">
    <property type="gene designation" value="rnf8.L"/>
</dbReference>
<dbReference type="OrthoDB" id="5330228at2759"/>
<dbReference type="UniPathway" id="UPA00143"/>
<dbReference type="Proteomes" id="UP000186698">
    <property type="component" value="Chromosome 5L"/>
</dbReference>
<dbReference type="Bgee" id="431911">
    <property type="expression patterns" value="Expressed in blastula and 19 other cell types or tissues"/>
</dbReference>
<dbReference type="GO" id="GO:0000781">
    <property type="term" value="C:chromosome, telomeric region"/>
    <property type="evidence" value="ECO:0000250"/>
    <property type="project" value="UniProtKB"/>
</dbReference>
<dbReference type="GO" id="GO:0005829">
    <property type="term" value="C:cytosol"/>
    <property type="evidence" value="ECO:0000318"/>
    <property type="project" value="GO_Central"/>
</dbReference>
<dbReference type="GO" id="GO:0005634">
    <property type="term" value="C:nucleus"/>
    <property type="evidence" value="ECO:0000250"/>
    <property type="project" value="UniProtKB"/>
</dbReference>
<dbReference type="GO" id="GO:0035861">
    <property type="term" value="C:site of double-strand break"/>
    <property type="evidence" value="ECO:0000250"/>
    <property type="project" value="UniProtKB"/>
</dbReference>
<dbReference type="GO" id="GO:0000151">
    <property type="term" value="C:ubiquitin ligase complex"/>
    <property type="evidence" value="ECO:0000250"/>
    <property type="project" value="UniProtKB"/>
</dbReference>
<dbReference type="GO" id="GO:0003682">
    <property type="term" value="F:chromatin binding"/>
    <property type="evidence" value="ECO:0000250"/>
    <property type="project" value="UniProtKB"/>
</dbReference>
<dbReference type="GO" id="GO:0042393">
    <property type="term" value="F:histone binding"/>
    <property type="evidence" value="ECO:0000250"/>
    <property type="project" value="UniProtKB"/>
</dbReference>
<dbReference type="GO" id="GO:0042803">
    <property type="term" value="F:protein homodimerization activity"/>
    <property type="evidence" value="ECO:0000250"/>
    <property type="project" value="UniProtKB"/>
</dbReference>
<dbReference type="GO" id="GO:0043130">
    <property type="term" value="F:ubiquitin binding"/>
    <property type="evidence" value="ECO:0007669"/>
    <property type="project" value="UniProtKB-UniRule"/>
</dbReference>
<dbReference type="GO" id="GO:0061630">
    <property type="term" value="F:ubiquitin protein ligase activity"/>
    <property type="evidence" value="ECO:0000250"/>
    <property type="project" value="UniProtKB"/>
</dbReference>
<dbReference type="GO" id="GO:0008270">
    <property type="term" value="F:zinc ion binding"/>
    <property type="evidence" value="ECO:0000250"/>
    <property type="project" value="UniProtKB"/>
</dbReference>
<dbReference type="GO" id="GO:0006974">
    <property type="term" value="P:DNA damage response"/>
    <property type="evidence" value="ECO:0000250"/>
    <property type="project" value="UniProtKB"/>
</dbReference>
<dbReference type="GO" id="GO:0140861">
    <property type="term" value="P:DNA repair-dependent chromatin remodeling"/>
    <property type="evidence" value="ECO:0000250"/>
    <property type="project" value="UniProtKB"/>
</dbReference>
<dbReference type="GO" id="GO:0006302">
    <property type="term" value="P:double-strand break repair"/>
    <property type="evidence" value="ECO:0000250"/>
    <property type="project" value="UniProtKB"/>
</dbReference>
<dbReference type="GO" id="GO:0006303">
    <property type="term" value="P:double-strand break repair via nonhomologous end joining"/>
    <property type="evidence" value="ECO:0000250"/>
    <property type="project" value="UniProtKB"/>
</dbReference>
<dbReference type="GO" id="GO:0040029">
    <property type="term" value="P:epigenetic regulation of gene expression"/>
    <property type="evidence" value="ECO:0000250"/>
    <property type="project" value="UniProtKB"/>
</dbReference>
<dbReference type="GO" id="GO:0045190">
    <property type="term" value="P:isotype switching"/>
    <property type="evidence" value="ECO:0000250"/>
    <property type="project" value="UniProtKB"/>
</dbReference>
<dbReference type="GO" id="GO:0034244">
    <property type="term" value="P:negative regulation of transcription elongation by RNA polymerase II"/>
    <property type="evidence" value="ECO:0000250"/>
    <property type="project" value="UniProtKB"/>
</dbReference>
<dbReference type="GO" id="GO:0045739">
    <property type="term" value="P:positive regulation of DNA repair"/>
    <property type="evidence" value="ECO:0000250"/>
    <property type="project" value="UniProtKB"/>
</dbReference>
<dbReference type="GO" id="GO:1905168">
    <property type="term" value="P:positive regulation of double-strand break repair via homologous recombination"/>
    <property type="evidence" value="ECO:0000250"/>
    <property type="project" value="UniProtKB"/>
</dbReference>
<dbReference type="GO" id="GO:0070936">
    <property type="term" value="P:protein K48-linked ubiquitination"/>
    <property type="evidence" value="ECO:0000250"/>
    <property type="project" value="UniProtKB"/>
</dbReference>
<dbReference type="GO" id="GO:0085020">
    <property type="term" value="P:protein K6-linked ubiquitination"/>
    <property type="evidence" value="ECO:0000250"/>
    <property type="project" value="UniProtKB"/>
</dbReference>
<dbReference type="GO" id="GO:0070534">
    <property type="term" value="P:protein K63-linked ubiquitination"/>
    <property type="evidence" value="ECO:0000250"/>
    <property type="project" value="UniProtKB"/>
</dbReference>
<dbReference type="GO" id="GO:0010212">
    <property type="term" value="P:response to ionizing radiation"/>
    <property type="evidence" value="ECO:0000250"/>
    <property type="project" value="UniProtKB"/>
</dbReference>
<dbReference type="GO" id="GO:0035092">
    <property type="term" value="P:sperm DNA condensation"/>
    <property type="evidence" value="ECO:0000250"/>
    <property type="project" value="UniProtKB"/>
</dbReference>
<dbReference type="GO" id="GO:0006511">
    <property type="term" value="P:ubiquitin-dependent protein catabolic process"/>
    <property type="evidence" value="ECO:0000250"/>
    <property type="project" value="UniProtKB"/>
</dbReference>
<dbReference type="CDD" id="cd22663">
    <property type="entry name" value="FHA_RNF8"/>
    <property type="match status" value="1"/>
</dbReference>
<dbReference type="CDD" id="cd16535">
    <property type="entry name" value="RING-HC_RNF8"/>
    <property type="match status" value="1"/>
</dbReference>
<dbReference type="FunFam" id="1.20.5.170:FF:000050">
    <property type="entry name" value="E3 ubiquitin-protein ligase RNF8"/>
    <property type="match status" value="1"/>
</dbReference>
<dbReference type="FunFam" id="2.60.200.20:FF:000015">
    <property type="entry name" value="E3 ubiquitin-protein ligase RNF8"/>
    <property type="match status" value="1"/>
</dbReference>
<dbReference type="FunFam" id="3.30.40.10:FF:000242">
    <property type="entry name" value="E3 ubiquitin-protein ligase RNF8"/>
    <property type="match status" value="1"/>
</dbReference>
<dbReference type="Gene3D" id="1.20.5.170">
    <property type="match status" value="1"/>
</dbReference>
<dbReference type="Gene3D" id="2.60.200.20">
    <property type="match status" value="1"/>
</dbReference>
<dbReference type="Gene3D" id="3.30.40.10">
    <property type="entry name" value="Zinc/RING finger domain, C3HC4 (zinc finger)"/>
    <property type="match status" value="1"/>
</dbReference>
<dbReference type="HAMAP" id="MF_03067">
    <property type="entry name" value="RNF8"/>
    <property type="match status" value="1"/>
</dbReference>
<dbReference type="InterPro" id="IPR000253">
    <property type="entry name" value="FHA_dom"/>
</dbReference>
<dbReference type="InterPro" id="IPR017335">
    <property type="entry name" value="RNF8"/>
</dbReference>
<dbReference type="InterPro" id="IPR008984">
    <property type="entry name" value="SMAD_FHA_dom_sf"/>
</dbReference>
<dbReference type="InterPro" id="IPR001841">
    <property type="entry name" value="Znf_RING"/>
</dbReference>
<dbReference type="InterPro" id="IPR013083">
    <property type="entry name" value="Znf_RING/FYVE/PHD"/>
</dbReference>
<dbReference type="InterPro" id="IPR017907">
    <property type="entry name" value="Znf_RING_CS"/>
</dbReference>
<dbReference type="PANTHER" id="PTHR15067">
    <property type="entry name" value="E3 UBIQUITIN-PROTEIN LIGASE RNF8"/>
    <property type="match status" value="1"/>
</dbReference>
<dbReference type="PANTHER" id="PTHR15067:SF4">
    <property type="entry name" value="E3 UBIQUITIN-PROTEIN LIGASE RNF8"/>
    <property type="match status" value="1"/>
</dbReference>
<dbReference type="Pfam" id="PF00498">
    <property type="entry name" value="FHA"/>
    <property type="match status" value="1"/>
</dbReference>
<dbReference type="Pfam" id="PF13920">
    <property type="entry name" value="zf-C3HC4_3"/>
    <property type="match status" value="1"/>
</dbReference>
<dbReference type="PIRSF" id="PIRSF037950">
    <property type="entry name" value="E3_ubiquit_lig_RNF8"/>
    <property type="match status" value="1"/>
</dbReference>
<dbReference type="SMART" id="SM00184">
    <property type="entry name" value="RING"/>
    <property type="match status" value="1"/>
</dbReference>
<dbReference type="SUPFAM" id="SSF57850">
    <property type="entry name" value="RING/U-box"/>
    <property type="match status" value="1"/>
</dbReference>
<dbReference type="SUPFAM" id="SSF49879">
    <property type="entry name" value="SMAD/FHA domain"/>
    <property type="match status" value="1"/>
</dbReference>
<dbReference type="PROSITE" id="PS50006">
    <property type="entry name" value="FHA_DOMAIN"/>
    <property type="match status" value="1"/>
</dbReference>
<dbReference type="PROSITE" id="PS00518">
    <property type="entry name" value="ZF_RING_1"/>
    <property type="match status" value="1"/>
</dbReference>
<dbReference type="PROSITE" id="PS50089">
    <property type="entry name" value="ZF_RING_2"/>
    <property type="match status" value="1"/>
</dbReference>
<keyword id="KW-0156">Chromatin regulator</keyword>
<keyword id="KW-0227">DNA damage</keyword>
<keyword id="KW-0234">DNA repair</keyword>
<keyword id="KW-0479">Metal-binding</keyword>
<keyword id="KW-0539">Nucleus</keyword>
<keyword id="KW-1185">Reference proteome</keyword>
<keyword id="KW-0808">Transferase</keyword>
<keyword id="KW-0833">Ubl conjugation pathway</keyword>
<keyword id="KW-0862">Zinc</keyword>
<keyword id="KW-0863">Zinc-finger</keyword>
<reference key="1">
    <citation type="submission" date="2004-05" db="EMBL/GenBank/DDBJ databases">
        <authorList>
            <consortium name="NIH - Xenopus Gene Collection (XGC) project"/>
        </authorList>
    </citation>
    <scope>NUCLEOTIDE SEQUENCE [LARGE SCALE MRNA]</scope>
    <source>
        <tissue>Oocyte</tissue>
    </source>
</reference>
<accession>Q6NRG0</accession>
<protein>
    <recommendedName>
        <fullName evidence="1">E3 ubiquitin-protein ligase rnf8-B</fullName>
        <ecNumber evidence="1">2.3.2.27</ecNumber>
    </recommendedName>
    <alternativeName>
        <fullName evidence="1">RING finger protein 8-B</fullName>
    </alternativeName>
    <alternativeName>
        <fullName>RING-type E3 ubiquitin transferase rnf8-B</fullName>
    </alternativeName>
</protein>
<comment type="function">
    <text evidence="1">E3 ubiquitin-protein ligase that plays a key role in DNA damage signaling via 2 distinct roles: by mediating the 'Lys-63'-linked ubiquitination of histones H2A and H2AX and promoting the recruitment of DNA repair proteins at double-strand breaks (DSBs) sites, and by catalyzing 'Lys-48'-linked ubiquitination to remove target proteins from DNA damage sites. Following DNA DSBs, it is recruited to the sites of damage by ATM-phosphorylated mdc1 and catalyzes the 'Lys-63'-linked ubiquitination of histones H2A and H2AX, thereby promoting the formation of tp53bp1 and brca1 ionizing radiation-induced foci (IRIF). H2A ubiquitination also mediates the ATM-dependent transcriptional silencing at regions flanking DSBs in cis, a mechanism to avoid collision between transcription and repair intermediates. Also catalyzes the formation of 'Lys-48'-linked polyubiquitin chains, leading to degradation of substrate proteins. In addition to its function in damage signaling, also plays a role in higher-order chromatin structure by mediating extensive chromatin decondensation.</text>
</comment>
<comment type="catalytic activity">
    <reaction evidence="1">
        <text>S-ubiquitinyl-[E2 ubiquitin-conjugating enzyme]-L-cysteine + [acceptor protein]-L-lysine = [E2 ubiquitin-conjugating enzyme]-L-cysteine + N(6)-ubiquitinyl-[acceptor protein]-L-lysine.</text>
        <dbReference type="EC" id="2.3.2.27"/>
    </reaction>
</comment>
<comment type="pathway">
    <text evidence="1">Protein modification; protein ubiquitination.</text>
</comment>
<comment type="subunit">
    <text evidence="1">Homodimer. Forms a E2-E3 ubiquitin ligase complex composed of the rnf8 homodimer and a E2 heterodimer of ube2n and ube2v2.</text>
</comment>
<comment type="subcellular location">
    <subcellularLocation>
        <location evidence="1">Nucleus</location>
    </subcellularLocation>
    <text evidence="1">Following DNA double-strand breaks, recruited to the sites of damage.</text>
</comment>
<comment type="domain">
    <text evidence="1">The FHA domain specifically recognizes and binds ATM-phosphorylated MDC1.</text>
</comment>
<comment type="similarity">
    <text evidence="1">Belongs to the RNF8 family.</text>
</comment>
<gene>
    <name evidence="1" type="primary">rnf8-B</name>
</gene>